<sequence>EKCLDQIQVNSLENLSLLVPSLCLLPPVRGNCSSQILHYFYNTTSRTCETFIYSGCNGNRNNFNSEEYCLKTCRRNKNRNNNN</sequence>
<organism>
    <name type="scientific">Notamacropus eugenii</name>
    <name type="common">Tammar wallaby</name>
    <name type="synonym">Macropus eugenii</name>
    <dbReference type="NCBI Taxonomy" id="9315"/>
    <lineage>
        <taxon>Eukaryota</taxon>
        <taxon>Metazoa</taxon>
        <taxon>Chordata</taxon>
        <taxon>Craniata</taxon>
        <taxon>Vertebrata</taxon>
        <taxon>Euteleostomi</taxon>
        <taxon>Mammalia</taxon>
        <taxon>Metatheria</taxon>
        <taxon>Diprotodontia</taxon>
        <taxon>Macropodidae</taxon>
        <taxon>Notamacropus</taxon>
    </lineage>
</organism>
<evidence type="ECO:0000250" key="1"/>
<evidence type="ECO:0000255" key="2"/>
<evidence type="ECO:0000255" key="3">
    <source>
        <dbReference type="PROSITE-ProRule" id="PRU00031"/>
    </source>
</evidence>
<evidence type="ECO:0000305" key="4"/>
<proteinExistence type="evidence at protein level"/>
<accession>O62845</accession>
<comment type="subcellular location">
    <subcellularLocation>
        <location>Secreted</location>
    </subcellularLocation>
</comment>
<comment type="tissue specificity">
    <text>Found in the whey fraction of milk.</text>
</comment>
<comment type="developmental stage">
    <text>Expressed only in the early stage of lactation. Decrease in expression correlates with a change in the sucking pattern of the young.</text>
</comment>
<comment type="PTM">
    <text evidence="4">N-glycosylated.</text>
</comment>
<reference key="1">
    <citation type="journal article" date="1998" name="Comp. Biochem. Physiol.">
        <title>Developmentally-regulated expression of a putative protease inhibitor gene in the lactating mammary gland of the tammar wallaby, Macropus eugenii. eugenii.</title>
        <authorList>
            <person name="Simpson K.J."/>
            <person name="Shaw D."/>
            <person name="Nicholas K.R."/>
        </authorList>
    </citation>
    <scope>NUCLEOTIDE SEQUENCE [MRNA]</scope>
    <scope>PROTEIN SEQUENCE OF 1-30 AND 47-71</scope>
    <source>
        <tissue>Lactating mammary gland</tissue>
    </source>
</reference>
<feature type="chain" id="PRO_0000155448" description="Early lactation protein">
    <location>
        <begin position="1"/>
        <end position="83"/>
    </location>
</feature>
<feature type="domain" description="BPTI/Kunitz inhibitor" evidence="3">
    <location>
        <begin position="23"/>
        <end position="73"/>
    </location>
</feature>
<feature type="site" description="Reactive bond" evidence="1">
    <location>
        <begin position="33"/>
        <end position="34"/>
    </location>
</feature>
<feature type="glycosylation site" description="N-linked (GlcNAc...) asparagine" evidence="2">
    <location>
        <position position="14"/>
    </location>
</feature>
<feature type="glycosylation site" description="N-linked (GlcNAc...) asparagine" evidence="2">
    <location>
        <position position="31"/>
    </location>
</feature>
<feature type="glycosylation site" description="N-linked (GlcNAc...) asparagine" evidence="2">
    <location>
        <position position="42"/>
    </location>
</feature>
<feature type="disulfide bond" evidence="3">
    <location>
        <begin position="23"/>
        <end position="73"/>
    </location>
</feature>
<feature type="disulfide bond" evidence="3">
    <location>
        <begin position="32"/>
        <end position="56"/>
    </location>
</feature>
<feature type="disulfide bond" evidence="3">
    <location>
        <begin position="48"/>
        <end position="69"/>
    </location>
</feature>
<protein>
    <recommendedName>
        <fullName>Early lactation protein</fullName>
    </recommendedName>
</protein>
<name>ELAC_NOTEU</name>
<dbReference type="EMBL" id="AJ000490">
    <property type="protein sequence ID" value="CAA04128.1"/>
    <property type="molecule type" value="mRNA"/>
</dbReference>
<dbReference type="SMR" id="O62845"/>
<dbReference type="GlyCosmos" id="O62845">
    <property type="glycosylation" value="3 sites, No reported glycans"/>
</dbReference>
<dbReference type="GO" id="GO:0005615">
    <property type="term" value="C:extracellular space"/>
    <property type="evidence" value="ECO:0007669"/>
    <property type="project" value="TreeGrafter"/>
</dbReference>
<dbReference type="GO" id="GO:0004867">
    <property type="term" value="F:serine-type endopeptidase inhibitor activity"/>
    <property type="evidence" value="ECO:0007669"/>
    <property type="project" value="UniProtKB-KW"/>
</dbReference>
<dbReference type="GO" id="GO:0007595">
    <property type="term" value="P:lactation"/>
    <property type="evidence" value="ECO:0007669"/>
    <property type="project" value="UniProtKB-KW"/>
</dbReference>
<dbReference type="CDD" id="cd22632">
    <property type="entry name" value="Kunitz_ELP-like"/>
    <property type="match status" value="1"/>
</dbReference>
<dbReference type="FunFam" id="4.10.410.10:FF:000011">
    <property type="entry name" value="Tissue factor pathway inhibitor"/>
    <property type="match status" value="1"/>
</dbReference>
<dbReference type="Gene3D" id="4.10.410.10">
    <property type="entry name" value="Pancreatic trypsin inhibitor Kunitz domain"/>
    <property type="match status" value="1"/>
</dbReference>
<dbReference type="InterPro" id="IPR002223">
    <property type="entry name" value="Kunitz_BPTI"/>
</dbReference>
<dbReference type="InterPro" id="IPR036880">
    <property type="entry name" value="Kunitz_BPTI_sf"/>
</dbReference>
<dbReference type="InterPro" id="IPR020901">
    <property type="entry name" value="Prtase_inh_Kunz-CS"/>
</dbReference>
<dbReference type="InterPro" id="IPR050098">
    <property type="entry name" value="TFPI/VKTCI-like"/>
</dbReference>
<dbReference type="PANTHER" id="PTHR10083:SF380">
    <property type="entry name" value="COLOSTRUM TRYPSIN INHIBITOR"/>
    <property type="match status" value="1"/>
</dbReference>
<dbReference type="PANTHER" id="PTHR10083">
    <property type="entry name" value="KUNITZ-TYPE PROTEASE INHIBITOR-RELATED"/>
    <property type="match status" value="1"/>
</dbReference>
<dbReference type="Pfam" id="PF00014">
    <property type="entry name" value="Kunitz_BPTI"/>
    <property type="match status" value="1"/>
</dbReference>
<dbReference type="PRINTS" id="PR00759">
    <property type="entry name" value="BASICPTASE"/>
</dbReference>
<dbReference type="SMART" id="SM00131">
    <property type="entry name" value="KU"/>
    <property type="match status" value="1"/>
</dbReference>
<dbReference type="SUPFAM" id="SSF57362">
    <property type="entry name" value="BPTI-like"/>
    <property type="match status" value="1"/>
</dbReference>
<dbReference type="PROSITE" id="PS00280">
    <property type="entry name" value="BPTI_KUNITZ_1"/>
    <property type="match status" value="1"/>
</dbReference>
<dbReference type="PROSITE" id="PS50279">
    <property type="entry name" value="BPTI_KUNITZ_2"/>
    <property type="match status" value="1"/>
</dbReference>
<gene>
    <name type="primary">ELP</name>
</gene>
<keyword id="KW-0903">Direct protein sequencing</keyword>
<keyword id="KW-1015">Disulfide bond</keyword>
<keyword id="KW-0325">Glycoprotein</keyword>
<keyword id="KW-0421">Lactation</keyword>
<keyword id="KW-0494">Milk protein</keyword>
<keyword id="KW-0646">Protease inhibitor</keyword>
<keyword id="KW-0964">Secreted</keyword>
<keyword id="KW-0722">Serine protease inhibitor</keyword>